<proteinExistence type="predicted"/>
<protein>
    <recommendedName>
        <fullName>Lid2 complex component jmj3</fullName>
        <shortName>Lid2C component jmj3</shortName>
    </recommendedName>
</protein>
<accession>O94691</accession>
<comment type="subunit">
    <text evidence="4 5">Component of the Lid2 complex composed of ash2, jmj3, lid2, sdc1 and snt2.</text>
</comment>
<comment type="subcellular location">
    <subcellularLocation>
        <location evidence="7">Nucleus</location>
    </subcellularLocation>
</comment>
<name>JMJ3_SCHPO</name>
<sequence length="752" mass="84930">MQQNVKEKHAGKSDTSVSSLECEIDYHIEGSDGIPVVEPKISEFVDMESFIRRVERLGKKYGAIKVVRPSSVLNPWNEDTMKPSDVKMDLWLERMVRRKGEYFEIQSDIDHGSAGPKKPTDMNVDDRFPSNAGSSNDFENNVAKAIAYYWRSLTHDSLWYGYTNRPSIPFYFIPSISAAQKDRVHLRSNTLINTWPNVGHLFAGKWKTTLPWRVESPELHAVQVHLGGSSLQWYVIPSAHSESFKKLAGKLAQDEHWRCSDFLLHQNILFPPSTLVQNGIVTYSTVLKQDELLITFPGTHHSAFCLGDAVLRRFVFRSPRSASNYEFSNLRRLMVSESLYSSKSLWPHSHKPQRACSQKFLDEFYLHDLPESNIHDSGNFHPIHSSVDNNSFSQRDFDSPNSINPPSPLMSNHESASTEHFNSTTTTEKELSSLHVGEERKNRSLPLSLIWNSKAREEYIKKQKEENGDNIEFSHFDPLYTRPSSHPLHPPPILGLPVPAQFARGELFLGRILEDRVSEHMLLLECEKSDVVEVPYECILTSSSAAGRRESSYYNPALKAPNIVYDDGVPINWNEYSELPSLDRFVLPKLLPGKPIEFTPPISVEPTSIKTIAAEESSEPTSSVDVAPTPVEDVNVNLESISNTNESVVDLSDPLVSKNGFEDVERSSVADLEEDVLETRSSIFETSDIDDRLTVIDRSQSVVPSESEFSIAGANLTRRNAVDFSVSLDTYELYVSDEVENVDDFSLFPSLE</sequence>
<keyword id="KW-0539">Nucleus</keyword>
<keyword id="KW-1185">Reference proteome</keyword>
<keyword id="KW-0804">Transcription</keyword>
<keyword id="KW-0805">Transcription regulation</keyword>
<feature type="chain" id="PRO_0000084288" description="Lid2 complex component jmj3">
    <location>
        <begin position="1"/>
        <end position="752"/>
    </location>
</feature>
<feature type="domain" description="JmjN" evidence="1">
    <location>
        <begin position="34"/>
        <end position="75"/>
    </location>
</feature>
<feature type="domain" description="JmjC" evidence="2">
    <location>
        <begin position="162"/>
        <end position="333"/>
    </location>
</feature>
<feature type="region of interest" description="Disordered" evidence="3">
    <location>
        <begin position="391"/>
        <end position="438"/>
    </location>
</feature>
<feature type="compositionally biased region" description="Polar residues" evidence="3">
    <location>
        <begin position="391"/>
        <end position="402"/>
    </location>
</feature>
<feature type="compositionally biased region" description="Polar residues" evidence="3">
    <location>
        <begin position="409"/>
        <end position="423"/>
    </location>
</feature>
<feature type="compositionally biased region" description="Basic and acidic residues" evidence="3">
    <location>
        <begin position="427"/>
        <end position="438"/>
    </location>
</feature>
<dbReference type="EMBL" id="CU329671">
    <property type="protein sequence ID" value="CAB36869.1"/>
    <property type="molecule type" value="Genomic_DNA"/>
</dbReference>
<dbReference type="PIR" id="T40696">
    <property type="entry name" value="T40696"/>
</dbReference>
<dbReference type="RefSeq" id="NP_595639.1">
    <property type="nucleotide sequence ID" value="NM_001021533.2"/>
</dbReference>
<dbReference type="SMR" id="O94691"/>
<dbReference type="BioGRID" id="277299">
    <property type="interactions" value="13"/>
</dbReference>
<dbReference type="FunCoup" id="O94691">
    <property type="interactions" value="272"/>
</dbReference>
<dbReference type="STRING" id="284812.O94691"/>
<dbReference type="iPTMnet" id="O94691"/>
<dbReference type="PaxDb" id="4896-SPBC83.07.1"/>
<dbReference type="EnsemblFungi" id="SPBC83.07.1">
    <property type="protein sequence ID" value="SPBC83.07.1:pep"/>
    <property type="gene ID" value="SPBC83.07"/>
</dbReference>
<dbReference type="GeneID" id="2540780"/>
<dbReference type="KEGG" id="spo:2540780"/>
<dbReference type="PomBase" id="SPBC83.07">
    <property type="gene designation" value="jmj3"/>
</dbReference>
<dbReference type="VEuPathDB" id="FungiDB:SPBC83.07"/>
<dbReference type="eggNOG" id="KOG0958">
    <property type="taxonomic scope" value="Eukaryota"/>
</dbReference>
<dbReference type="HOGENOM" id="CLU_378624_0_0_1"/>
<dbReference type="InParanoid" id="O94691"/>
<dbReference type="OMA" id="YECILTS"/>
<dbReference type="PRO" id="PR:O94691"/>
<dbReference type="Proteomes" id="UP000002485">
    <property type="component" value="Chromosome II"/>
</dbReference>
<dbReference type="GO" id="GO:0000785">
    <property type="term" value="C:chromatin"/>
    <property type="evidence" value="ECO:0000318"/>
    <property type="project" value="GO_Central"/>
</dbReference>
<dbReference type="GO" id="GO:0005829">
    <property type="term" value="C:cytosol"/>
    <property type="evidence" value="ECO:0007005"/>
    <property type="project" value="PomBase"/>
</dbReference>
<dbReference type="GO" id="GO:0048189">
    <property type="term" value="C:Lid2 complex"/>
    <property type="evidence" value="ECO:0000314"/>
    <property type="project" value="PomBase"/>
</dbReference>
<dbReference type="GO" id="GO:0005634">
    <property type="term" value="C:nucleus"/>
    <property type="evidence" value="ECO:0007005"/>
    <property type="project" value="PomBase"/>
</dbReference>
<dbReference type="GO" id="GO:0051864">
    <property type="term" value="F:histone H3K36 demethylase activity"/>
    <property type="evidence" value="ECO:0000318"/>
    <property type="project" value="GO_Central"/>
</dbReference>
<dbReference type="GO" id="GO:0032454">
    <property type="term" value="F:histone H3K9 demethylase activity"/>
    <property type="evidence" value="ECO:0000318"/>
    <property type="project" value="GO_Central"/>
</dbReference>
<dbReference type="GO" id="GO:0006338">
    <property type="term" value="P:chromatin remodeling"/>
    <property type="evidence" value="ECO:0000318"/>
    <property type="project" value="GO_Central"/>
</dbReference>
<dbReference type="GO" id="GO:0010468">
    <property type="term" value="P:regulation of gene expression"/>
    <property type="evidence" value="ECO:0000318"/>
    <property type="project" value="GO_Central"/>
</dbReference>
<dbReference type="Gene3D" id="2.60.120.650">
    <property type="entry name" value="Cupin"/>
    <property type="match status" value="1"/>
</dbReference>
<dbReference type="InterPro" id="IPR003347">
    <property type="entry name" value="JmjC_dom"/>
</dbReference>
<dbReference type="InterPro" id="IPR003349">
    <property type="entry name" value="JmjN"/>
</dbReference>
<dbReference type="PANTHER" id="PTHR10694:SF7">
    <property type="entry name" value="[HISTONE H3]-TRIMETHYL-L-LYSINE(9) DEMETHYLASE"/>
    <property type="match status" value="1"/>
</dbReference>
<dbReference type="PANTHER" id="PTHR10694">
    <property type="entry name" value="LYSINE-SPECIFIC DEMETHYLASE"/>
    <property type="match status" value="1"/>
</dbReference>
<dbReference type="Pfam" id="PF02373">
    <property type="entry name" value="JmjC"/>
    <property type="match status" value="1"/>
</dbReference>
<dbReference type="Pfam" id="PF02375">
    <property type="entry name" value="JmjN"/>
    <property type="match status" value="1"/>
</dbReference>
<dbReference type="SMART" id="SM00558">
    <property type="entry name" value="JmjC"/>
    <property type="match status" value="1"/>
</dbReference>
<dbReference type="SMART" id="SM00545">
    <property type="entry name" value="JmjN"/>
    <property type="match status" value="1"/>
</dbReference>
<dbReference type="SUPFAM" id="SSF51197">
    <property type="entry name" value="Clavaminate synthase-like"/>
    <property type="match status" value="1"/>
</dbReference>
<dbReference type="PROSITE" id="PS51184">
    <property type="entry name" value="JMJC"/>
    <property type="match status" value="1"/>
</dbReference>
<dbReference type="PROSITE" id="PS51183">
    <property type="entry name" value="JMJN"/>
    <property type="match status" value="1"/>
</dbReference>
<reference evidence="8" key="1">
    <citation type="journal article" date="2002" name="Nature">
        <title>The genome sequence of Schizosaccharomyces pombe.</title>
        <authorList>
            <person name="Wood V."/>
            <person name="Gwilliam R."/>
            <person name="Rajandream M.A."/>
            <person name="Lyne M.H."/>
            <person name="Lyne R."/>
            <person name="Stewart A."/>
            <person name="Sgouros J.G."/>
            <person name="Peat N."/>
            <person name="Hayles J."/>
            <person name="Baker S.G."/>
            <person name="Basham D."/>
            <person name="Bowman S."/>
            <person name="Brooks K."/>
            <person name="Brown D."/>
            <person name="Brown S."/>
            <person name="Chillingworth T."/>
            <person name="Churcher C.M."/>
            <person name="Collins M."/>
            <person name="Connor R."/>
            <person name="Cronin A."/>
            <person name="Davis P."/>
            <person name="Feltwell T."/>
            <person name="Fraser A."/>
            <person name="Gentles S."/>
            <person name="Goble A."/>
            <person name="Hamlin N."/>
            <person name="Harris D.E."/>
            <person name="Hidalgo J."/>
            <person name="Hodgson G."/>
            <person name="Holroyd S."/>
            <person name="Hornsby T."/>
            <person name="Howarth S."/>
            <person name="Huckle E.J."/>
            <person name="Hunt S."/>
            <person name="Jagels K."/>
            <person name="James K.D."/>
            <person name="Jones L."/>
            <person name="Jones M."/>
            <person name="Leather S."/>
            <person name="McDonald S."/>
            <person name="McLean J."/>
            <person name="Mooney P."/>
            <person name="Moule S."/>
            <person name="Mungall K.L."/>
            <person name="Murphy L.D."/>
            <person name="Niblett D."/>
            <person name="Odell C."/>
            <person name="Oliver K."/>
            <person name="O'Neil S."/>
            <person name="Pearson D."/>
            <person name="Quail M.A."/>
            <person name="Rabbinowitsch E."/>
            <person name="Rutherford K.M."/>
            <person name="Rutter S."/>
            <person name="Saunders D."/>
            <person name="Seeger K."/>
            <person name="Sharp S."/>
            <person name="Skelton J."/>
            <person name="Simmonds M.N."/>
            <person name="Squares R."/>
            <person name="Squares S."/>
            <person name="Stevens K."/>
            <person name="Taylor K."/>
            <person name="Taylor R.G."/>
            <person name="Tivey A."/>
            <person name="Walsh S.V."/>
            <person name="Warren T."/>
            <person name="Whitehead S."/>
            <person name="Woodward J.R."/>
            <person name="Volckaert G."/>
            <person name="Aert R."/>
            <person name="Robben J."/>
            <person name="Grymonprez B."/>
            <person name="Weltjens I."/>
            <person name="Vanstreels E."/>
            <person name="Rieger M."/>
            <person name="Schaefer M."/>
            <person name="Mueller-Auer S."/>
            <person name="Gabel C."/>
            <person name="Fuchs M."/>
            <person name="Duesterhoeft A."/>
            <person name="Fritzc C."/>
            <person name="Holzer E."/>
            <person name="Moestl D."/>
            <person name="Hilbert H."/>
            <person name="Borzym K."/>
            <person name="Langer I."/>
            <person name="Beck A."/>
            <person name="Lehrach H."/>
            <person name="Reinhardt R."/>
            <person name="Pohl T.M."/>
            <person name="Eger P."/>
            <person name="Zimmermann W."/>
            <person name="Wedler H."/>
            <person name="Wambutt R."/>
            <person name="Purnelle B."/>
            <person name="Goffeau A."/>
            <person name="Cadieu E."/>
            <person name="Dreano S."/>
            <person name="Gloux S."/>
            <person name="Lelaure V."/>
            <person name="Mottier S."/>
            <person name="Galibert F."/>
            <person name="Aves S.J."/>
            <person name="Xiang Z."/>
            <person name="Hunt C."/>
            <person name="Moore K."/>
            <person name="Hurst S.M."/>
            <person name="Lucas M."/>
            <person name="Rochet M."/>
            <person name="Gaillardin C."/>
            <person name="Tallada V.A."/>
            <person name="Garzon A."/>
            <person name="Thode G."/>
            <person name="Daga R.R."/>
            <person name="Cruzado L."/>
            <person name="Jimenez J."/>
            <person name="Sanchez M."/>
            <person name="del Rey F."/>
            <person name="Benito J."/>
            <person name="Dominguez A."/>
            <person name="Revuelta J.L."/>
            <person name="Moreno S."/>
            <person name="Armstrong J."/>
            <person name="Forsburg S.L."/>
            <person name="Cerutti L."/>
            <person name="Lowe T."/>
            <person name="McCombie W.R."/>
            <person name="Paulsen I."/>
            <person name="Potashkin J."/>
            <person name="Shpakovski G.V."/>
            <person name="Ussery D."/>
            <person name="Barrell B.G."/>
            <person name="Nurse P."/>
        </authorList>
    </citation>
    <scope>NUCLEOTIDE SEQUENCE [LARGE SCALE GENOMIC DNA]</scope>
    <source>
        <strain>972 / ATCC 24843</strain>
    </source>
</reference>
<reference evidence="7" key="2">
    <citation type="journal article" date="2003" name="J. Biol. Chem.">
        <title>High conservation of the Set1/Rad6 axis of histone 3 lysine 4 methylation in budding and fission yeasts.</title>
        <authorList>
            <person name="Roguev A."/>
            <person name="Schaft D."/>
            <person name="Shevchenko A."/>
            <person name="Aasland R."/>
            <person name="Shevchenko A."/>
            <person name="Stewart A.F."/>
        </authorList>
    </citation>
    <scope>COMPOSITION OF THE LID2 COMPLEX</scope>
</reference>
<reference evidence="7" key="3">
    <citation type="journal article" date="2004" name="Mol. Cell. Proteomics">
        <title>A comparative analysis of an orthologous proteomic environment in the yeasts Saccharomyces cerevisiae and Schizosaccharomyces pombe.</title>
        <authorList>
            <person name="Roguev A."/>
            <person name="Shevchenko A."/>
            <person name="Schaft D."/>
            <person name="Thomas H."/>
            <person name="Stewart A.F."/>
            <person name="Shevchenko A."/>
        </authorList>
    </citation>
    <scope>COMPOSITION OF THE LID2 COMPLEX</scope>
</reference>
<evidence type="ECO:0000255" key="1">
    <source>
        <dbReference type="PROSITE-ProRule" id="PRU00537"/>
    </source>
</evidence>
<evidence type="ECO:0000255" key="2">
    <source>
        <dbReference type="PROSITE-ProRule" id="PRU00538"/>
    </source>
</evidence>
<evidence type="ECO:0000256" key="3">
    <source>
        <dbReference type="SAM" id="MobiDB-lite"/>
    </source>
</evidence>
<evidence type="ECO:0000269" key="4">
    <source>
    </source>
</evidence>
<evidence type="ECO:0000269" key="5">
    <source>
    </source>
</evidence>
<evidence type="ECO:0000303" key="6">
    <source>
    </source>
</evidence>
<evidence type="ECO:0000305" key="7"/>
<evidence type="ECO:0000312" key="8">
    <source>
        <dbReference type="EMBL" id="CAB36869.1"/>
    </source>
</evidence>
<evidence type="ECO:0000312" key="9">
    <source>
        <dbReference type="PomBase" id="SPBC83.07"/>
    </source>
</evidence>
<organism>
    <name type="scientific">Schizosaccharomyces pombe (strain 972 / ATCC 24843)</name>
    <name type="common">Fission yeast</name>
    <dbReference type="NCBI Taxonomy" id="284812"/>
    <lineage>
        <taxon>Eukaryota</taxon>
        <taxon>Fungi</taxon>
        <taxon>Dikarya</taxon>
        <taxon>Ascomycota</taxon>
        <taxon>Taphrinomycotina</taxon>
        <taxon>Schizosaccharomycetes</taxon>
        <taxon>Schizosaccharomycetales</taxon>
        <taxon>Schizosaccharomycetaceae</taxon>
        <taxon>Schizosaccharomyces</taxon>
    </lineage>
</organism>
<gene>
    <name evidence="9" type="primary">jmj3</name>
    <name evidence="6" type="synonym">ecm5</name>
    <name type="ORF">SPBC83.07</name>
</gene>